<comment type="function">
    <text evidence="5 6">Critical for epithelial morphogenesis during oogenesis; border cell migration. Required in the germarium for the polarization of follicle cells during encapsulation of germline cells. Required for embryonic segmentation and trachea specification. Essential receptor molecule for upd and JAK/STAT signaling during oogenesis.</text>
</comment>
<comment type="subunit">
    <text evidence="8">Interacts with wdp; the interaction promotes internalization of dome and its subsequent lysosomal degradation; thereby reducing JAK/STAT signaling.</text>
</comment>
<comment type="interaction">
    <interactant intactId="EBI-119639">
        <id>Q9VWE0</id>
    </interactant>
    <interactant intactId="EBI-92671">
        <id>Q9VWE1</id>
        <label>et</label>
    </interactant>
    <organismsDiffer>false</organismsDiffer>
    <experiments>4</experiments>
</comment>
<comment type="subcellular location">
    <subcellularLocation>
        <location evidence="6">Apicolateral cell membrane</location>
        <topology evidence="6">Single-pass type I membrane protein</topology>
    </subcellularLocation>
    <text>Apicolateral membranes in follical cells.</text>
</comment>
<comment type="tissue specificity">
    <text evidence="5">In stage 11 embryos, tracheal pits show highest expression, at stage 14 high expression is detected in the posterior spiracles, gut and head.</text>
</comment>
<comment type="developmental stage">
    <text evidence="5">Expressed both maternally and zygotically in embryos.</text>
</comment>
<comment type="PTM">
    <text evidence="8">Undergoes lysosomal degradation.</text>
</comment>
<comment type="similarity">
    <text evidence="9">Belongs to the type I cytokine receptor family.</text>
</comment>
<proteinExistence type="evidence at protein level"/>
<feature type="signal peptide" evidence="2">
    <location>
        <begin position="1"/>
        <end position="23"/>
    </location>
</feature>
<feature type="chain" id="PRO_0000010999" description="Cytokine receptor">
    <location>
        <begin position="24"/>
        <end position="1282"/>
    </location>
</feature>
<feature type="topological domain" description="Extracellular" evidence="2">
    <location>
        <begin position="24"/>
        <end position="889"/>
    </location>
</feature>
<feature type="transmembrane region" description="Helical" evidence="2">
    <location>
        <begin position="890"/>
        <end position="910"/>
    </location>
</feature>
<feature type="topological domain" description="Cytoplasmic" evidence="2">
    <location>
        <begin position="911"/>
        <end position="1282"/>
    </location>
</feature>
<feature type="domain" description="Fibronectin type-III 1" evidence="3">
    <location>
        <begin position="124"/>
        <end position="220"/>
    </location>
</feature>
<feature type="domain" description="Fibronectin type-III 2" evidence="3">
    <location>
        <begin position="227"/>
        <end position="327"/>
    </location>
</feature>
<feature type="domain" description="Fibronectin type-III 3" evidence="3">
    <location>
        <begin position="329"/>
        <end position="431"/>
    </location>
</feature>
<feature type="domain" description="Fibronectin type-III 4" evidence="3">
    <location>
        <begin position="436"/>
        <end position="535"/>
    </location>
</feature>
<feature type="domain" description="Fibronectin type-III 5" evidence="3">
    <location>
        <begin position="537"/>
        <end position="631"/>
    </location>
</feature>
<feature type="domain" description="Fibronectin type-III 6" evidence="3">
    <location>
        <begin position="635"/>
        <end position="735"/>
    </location>
</feature>
<feature type="domain" description="Fibronectin type-III 7" evidence="3">
    <location>
        <begin position="736"/>
        <end position="836"/>
    </location>
</feature>
<feature type="region of interest" description="Disordered" evidence="4">
    <location>
        <begin position="989"/>
        <end position="1092"/>
    </location>
</feature>
<feature type="region of interest" description="Disordered" evidence="4">
    <location>
        <begin position="1238"/>
        <end position="1258"/>
    </location>
</feature>
<feature type="compositionally biased region" description="Basic and acidic residues" evidence="4">
    <location>
        <begin position="999"/>
        <end position="1009"/>
    </location>
</feature>
<feature type="compositionally biased region" description="Basic and acidic residues" evidence="4">
    <location>
        <begin position="1033"/>
        <end position="1064"/>
    </location>
</feature>
<feature type="modified residue" description="Phosphoserine" evidence="7">
    <location>
        <position position="976"/>
    </location>
</feature>
<feature type="glycosylation site" description="N-linked (GlcNAc...) asparagine" evidence="2">
    <location>
        <position position="44"/>
    </location>
</feature>
<feature type="glycosylation site" description="N-linked (GlcNAc...) asparagine" evidence="2">
    <location>
        <position position="86"/>
    </location>
</feature>
<feature type="glycosylation site" description="N-linked (GlcNAc...) asparagine" evidence="2">
    <location>
        <position position="87"/>
    </location>
</feature>
<feature type="glycosylation site" description="N-linked (GlcNAc...) asparagine" evidence="2">
    <location>
        <position position="114"/>
    </location>
</feature>
<feature type="glycosylation site" description="N-linked (GlcNAc...) asparagine" evidence="2">
    <location>
        <position position="143"/>
    </location>
</feature>
<feature type="glycosylation site" description="N-linked (GlcNAc...) asparagine" evidence="2">
    <location>
        <position position="156"/>
    </location>
</feature>
<feature type="glycosylation site" description="N-linked (GlcNAc...) asparagine" evidence="2">
    <location>
        <position position="184"/>
    </location>
</feature>
<feature type="glycosylation site" description="N-linked (GlcNAc...) asparagine" evidence="2">
    <location>
        <position position="230"/>
    </location>
</feature>
<feature type="glycosylation site" description="N-linked (GlcNAc...) asparagine" evidence="2">
    <location>
        <position position="235"/>
    </location>
</feature>
<feature type="glycosylation site" description="N-linked (GlcNAc...) asparagine" evidence="2">
    <location>
        <position position="278"/>
    </location>
</feature>
<feature type="glycosylation site" description="N-linked (GlcNAc...) asparagine" evidence="2">
    <location>
        <position position="298"/>
    </location>
</feature>
<feature type="glycosylation site" description="N-linked (GlcNAc...) asparagine" evidence="2">
    <location>
        <position position="310"/>
    </location>
</feature>
<feature type="glycosylation site" description="N-linked (GlcNAc...) asparagine" evidence="2">
    <location>
        <position position="376"/>
    </location>
</feature>
<feature type="glycosylation site" description="N-linked (GlcNAc...) asparagine" evidence="2">
    <location>
        <position position="448"/>
    </location>
</feature>
<feature type="glycosylation site" description="N-linked (GlcNAc...) asparagine" evidence="2">
    <location>
        <position position="466"/>
    </location>
</feature>
<feature type="glycosylation site" description="N-linked (GlcNAc...) asparagine" evidence="2">
    <location>
        <position position="568"/>
    </location>
</feature>
<feature type="glycosylation site" description="N-linked (GlcNAc...) asparagine" evidence="2">
    <location>
        <position position="581"/>
    </location>
</feature>
<feature type="glycosylation site" description="N-linked (GlcNAc...) asparagine" evidence="2">
    <location>
        <position position="626"/>
    </location>
</feature>
<feature type="glycosylation site" description="N-linked (GlcNAc...) asparagine" evidence="2">
    <location>
        <position position="676"/>
    </location>
</feature>
<feature type="glycosylation site" description="N-linked (GlcNAc...) asparagine" evidence="2">
    <location>
        <position position="703"/>
    </location>
</feature>
<feature type="glycosylation site" description="N-linked (GlcNAc...) asparagine" evidence="2">
    <location>
        <position position="777"/>
    </location>
</feature>
<feature type="glycosylation site" description="N-linked (GlcNAc...) asparagine" evidence="2">
    <location>
        <position position="790"/>
    </location>
</feature>
<feature type="glycosylation site" description="N-linked (GlcNAc...) asparagine" evidence="2">
    <location>
        <position position="862"/>
    </location>
</feature>
<feature type="disulfide bond" evidence="1">
    <location>
        <begin position="47"/>
        <end position="106"/>
    </location>
</feature>
<feature type="disulfide bond" evidence="1">
    <location>
        <begin position="132"/>
        <end position="142"/>
    </location>
</feature>
<feature type="disulfide bond" evidence="1">
    <location>
        <begin position="173"/>
        <end position="183"/>
    </location>
</feature>
<feature type="disulfide bond" evidence="1">
    <location>
        <begin position="472"/>
        <end position="482"/>
    </location>
</feature>
<keyword id="KW-1003">Cell membrane</keyword>
<keyword id="KW-0217">Developmental protein</keyword>
<keyword id="KW-1015">Disulfide bond</keyword>
<keyword id="KW-0325">Glycoprotein</keyword>
<keyword id="KW-0472">Membrane</keyword>
<keyword id="KW-0597">Phosphoprotein</keyword>
<keyword id="KW-0675">Receptor</keyword>
<keyword id="KW-1185">Reference proteome</keyword>
<keyword id="KW-0677">Repeat</keyword>
<keyword id="KW-0732">Signal</keyword>
<keyword id="KW-0812">Transmembrane</keyword>
<keyword id="KW-1133">Transmembrane helix</keyword>
<sequence length="1282" mass="142361">MVAQEQLVLLLMLLAGCRGGANAILDPGWVIPSKVEQLIGGDFNLSCTLNEDYFNGKSAEDCPVEKLYFTGGGRVYRDSKHIRILNNTTILFSDTNAVEQENDYHCMCDEYVINKSKVYVGTRPLLVRDFNCLDYDFQFMVCNFTQPPNTVITKYNISYNTNNDWRYSNTLDCNFDSAPVVTCNLTDDNYKRFSETFYFRLSISNALGHETQPITINHFERLVPARPGQNLTLLNRTESSVCLSWEMPRRSNYNRGLVWQVRVTPQNFEPITRPSWRNHTLTIKDTLCLTELPFAGYNYTLRVRVRANQNNTLWSEPMIYAFATAPAPPRRPPRVTYGSFYVYSSEKAMRFYWEPLEEHELNGPDFRYSISEYRINGTAVDPGLIKVESNSAMIDHWSMSAVHHFLIRSSNSQGLSVNATPMTIGPISNRDFKVREPRNIRSVYHPTNKSYTLSWDPPSDQRELQNYTVFWCVPKPGLQSECEGSIRFAEVASGLHHFTTSPDQLLTLHMAVSANYQSHNTGLHWAICSSDKKDDLAKMEPSIDVATSTSLTVSWSERVCAVILAGYNLTYCQRSAGRPDNCTTVTIDRYTNKHVIQNLVPYTDYSVKMLMYSDSRVSKYSDELVNRTGEAAPSQPRELQLIRVTSDSVELAWKPPLLANGVVRAYEGTFRSLHDNVTDTFRVSASADELVNNEKPITYRLGNLTAFTKYEISVRARTVYPSEPSNVILFSTAIGVPSPPQLYVINNPDQSSRLDWEPPRTPAGRIDFYEISLRDNNASCLTSTILPGRNLSYVMATPRCTSHNPFQLAVRAINVEQHPQLNGADAAEGAVLLMSTNGKGCEARTDALGEEERLQFEAYAANMTAYRLYRSDWGIYGFICTPDTHSVKAMYQTIEVTVAILVLGVIFYLVYKKYRKMSDIGLVLPQGIMETMKKPIDMGGLGLGLGPDSSVSGGIVCTRVDDSPPYTPQDLPHDFSSCGSESSKLLLRTASSSGGGGCVDRDGYDDNHETGPISAVGPPTSYLAMRHGLLVQNDRERERERDREQEREREQQQQQRESEMDREQSCTNGYIKPTQMKSWGGNGPSDNDHTFSVPSTAMTAPMSQPLSQIPLSGYVPVPIPQSRFNPAPVQPFGSPAVPSAATAAAASTFFPPAHLLNMDNYVQASDLHKLKPLVAAPLSQTGGPAFAGSSPATSPPLQLPPVHAASPAAATPKMADIGYTTMEQLQLTGLIKPPLAATVGSPTHAAGGAPGGGNQHSRLQPQINGYVTPQDLNAMAHNRHVL</sequence>
<protein>
    <recommendedName>
        <fullName>Cytokine receptor</fullName>
    </recommendedName>
    <alternativeName>
        <fullName>Protein domeless</fullName>
    </alternativeName>
</protein>
<accession>Q9VWE0</accession>
<dbReference type="EMBL" id="AJ420377">
    <property type="protein sequence ID" value="CAD12503.1"/>
    <property type="molecule type" value="mRNA"/>
</dbReference>
<dbReference type="EMBL" id="AY147847">
    <property type="protein sequence ID" value="AAN64333.1"/>
    <property type="molecule type" value="mRNA"/>
</dbReference>
<dbReference type="EMBL" id="AE014298">
    <property type="protein sequence ID" value="AAF49002.1"/>
    <property type="molecule type" value="Genomic_DNA"/>
</dbReference>
<dbReference type="EMBL" id="AY075427">
    <property type="protein sequence ID" value="AAL68243.1"/>
    <property type="molecule type" value="mRNA"/>
</dbReference>
<dbReference type="RefSeq" id="NP_523412.1">
    <property type="nucleotide sequence ID" value="NM_078688.3"/>
</dbReference>
<dbReference type="BioGRID" id="59272">
    <property type="interactions" value="37"/>
</dbReference>
<dbReference type="DIP" id="DIP-19869N"/>
<dbReference type="FunCoup" id="Q9VWE0">
    <property type="interactions" value="78"/>
</dbReference>
<dbReference type="IntAct" id="Q9VWE0">
    <property type="interactions" value="2"/>
</dbReference>
<dbReference type="STRING" id="7227.FBpp0074525"/>
<dbReference type="GlyCosmos" id="Q9VWE0">
    <property type="glycosylation" value="23 sites, No reported glycans"/>
</dbReference>
<dbReference type="GlyGen" id="Q9VWE0">
    <property type="glycosylation" value="24 sites"/>
</dbReference>
<dbReference type="iPTMnet" id="Q9VWE0"/>
<dbReference type="PaxDb" id="7227-FBpp0074525"/>
<dbReference type="DNASU" id="32976"/>
<dbReference type="EnsemblMetazoa" id="FBtr0074756">
    <property type="protein sequence ID" value="FBpp0074525"/>
    <property type="gene ID" value="FBgn0043903"/>
</dbReference>
<dbReference type="GeneID" id="32976"/>
<dbReference type="KEGG" id="dme:Dmel_CG14226"/>
<dbReference type="AGR" id="FB:FBgn0043903"/>
<dbReference type="CTD" id="32976"/>
<dbReference type="FlyBase" id="FBgn0043903">
    <property type="gene designation" value="dome"/>
</dbReference>
<dbReference type="VEuPathDB" id="VectorBase:FBgn0043903"/>
<dbReference type="eggNOG" id="ENOG502QTMM">
    <property type="taxonomic scope" value="Eukaryota"/>
</dbReference>
<dbReference type="HOGENOM" id="CLU_260365_0_0_1"/>
<dbReference type="InParanoid" id="Q9VWE0"/>
<dbReference type="OMA" id="NLTYCQR"/>
<dbReference type="OrthoDB" id="6381660at2759"/>
<dbReference type="PhylomeDB" id="Q9VWE0"/>
<dbReference type="Reactome" id="R-DME-209209">
    <property type="pathway name" value="Formation of the activated receptor complex"/>
</dbReference>
<dbReference type="Reactome" id="R-DME-209228">
    <property type="pathway name" value="Formation of the activated STAT92E dimer and transport to the nucleus"/>
</dbReference>
<dbReference type="Reactome" id="R-DME-210688">
    <property type="pathway name" value="Dephosphorylation by PTP61F phosphatases"/>
</dbReference>
<dbReference type="SignaLink" id="Q9VWE0"/>
<dbReference type="BioGRID-ORCS" id="32976">
    <property type="hits" value="0 hits in 3 CRISPR screens"/>
</dbReference>
<dbReference type="ChiTaRS" id="dome">
    <property type="organism name" value="fly"/>
</dbReference>
<dbReference type="GenomeRNAi" id="32976"/>
<dbReference type="PRO" id="PR:Q9VWE0"/>
<dbReference type="Proteomes" id="UP000000803">
    <property type="component" value="Chromosome X"/>
</dbReference>
<dbReference type="Bgee" id="FBgn0043903">
    <property type="expression patterns" value="Expressed in polar follicle cell (Drosophila) in ovary and 205 other cell types or tissues"/>
</dbReference>
<dbReference type="ExpressionAtlas" id="Q9VWE0">
    <property type="expression patterns" value="baseline and differential"/>
</dbReference>
<dbReference type="GO" id="GO:0016324">
    <property type="term" value="C:apical plasma membrane"/>
    <property type="evidence" value="ECO:0000314"/>
    <property type="project" value="FlyBase"/>
</dbReference>
<dbReference type="GO" id="GO:0016327">
    <property type="term" value="C:apicolateral plasma membrane"/>
    <property type="evidence" value="ECO:0007669"/>
    <property type="project" value="UniProtKB-SubCell"/>
</dbReference>
<dbReference type="GO" id="GO:0005886">
    <property type="term" value="C:plasma membrane"/>
    <property type="evidence" value="ECO:0000304"/>
    <property type="project" value="Reactome"/>
</dbReference>
<dbReference type="GO" id="GO:0004896">
    <property type="term" value="F:cytokine receptor activity"/>
    <property type="evidence" value="ECO:0000314"/>
    <property type="project" value="FlyBase"/>
</dbReference>
<dbReference type="GO" id="GO:0046982">
    <property type="term" value="F:protein heterodimerization activity"/>
    <property type="evidence" value="ECO:0000353"/>
    <property type="project" value="FlyBase"/>
</dbReference>
<dbReference type="GO" id="GO:1990782">
    <property type="term" value="F:protein tyrosine kinase binding"/>
    <property type="evidence" value="ECO:0000353"/>
    <property type="project" value="FlyBase"/>
</dbReference>
<dbReference type="GO" id="GO:0097678">
    <property type="term" value="F:SOCS family protein binding"/>
    <property type="evidence" value="ECO:0000353"/>
    <property type="project" value="FlyBase"/>
</dbReference>
<dbReference type="GO" id="GO:0097677">
    <property type="term" value="F:STAT family protein binding"/>
    <property type="evidence" value="ECO:0000353"/>
    <property type="project" value="FlyBase"/>
</dbReference>
<dbReference type="GO" id="GO:0007350">
    <property type="term" value="P:blastoderm segmentation"/>
    <property type="evidence" value="ECO:0000315"/>
    <property type="project" value="FlyBase"/>
</dbReference>
<dbReference type="GO" id="GO:0007298">
    <property type="term" value="P:border follicle cell migration"/>
    <property type="evidence" value="ECO:0000315"/>
    <property type="project" value="FlyBase"/>
</dbReference>
<dbReference type="GO" id="GO:0007259">
    <property type="term" value="P:cell surface receptor signaling pathway via JAK-STAT"/>
    <property type="evidence" value="ECO:0000314"/>
    <property type="project" value="FlyBase"/>
</dbReference>
<dbReference type="GO" id="GO:0001745">
    <property type="term" value="P:compound eye morphogenesis"/>
    <property type="evidence" value="ECO:0000315"/>
    <property type="project" value="FlyBase"/>
</dbReference>
<dbReference type="GO" id="GO:0019221">
    <property type="term" value="P:cytokine-mediated signaling pathway"/>
    <property type="evidence" value="ECO:0000316"/>
    <property type="project" value="FlyBase"/>
</dbReference>
<dbReference type="GO" id="GO:0050829">
    <property type="term" value="P:defense response to Gram-negative bacterium"/>
    <property type="evidence" value="ECO:0007001"/>
    <property type="project" value="FlyBase"/>
</dbReference>
<dbReference type="GO" id="GO:0071907">
    <property type="term" value="P:determination of digestive tract left/right asymmetry"/>
    <property type="evidence" value="ECO:0000315"/>
    <property type="project" value="FlyBase"/>
</dbReference>
<dbReference type="GO" id="GO:0007442">
    <property type="term" value="P:hindgut morphogenesis"/>
    <property type="evidence" value="ECO:0000315"/>
    <property type="project" value="FlyBase"/>
</dbReference>
<dbReference type="GO" id="GO:0045475">
    <property type="term" value="P:locomotor rhythm"/>
    <property type="evidence" value="ECO:0000315"/>
    <property type="project" value="FlyBase"/>
</dbReference>
<dbReference type="GO" id="GO:0007616">
    <property type="term" value="P:long-term memory"/>
    <property type="evidence" value="ECO:0000315"/>
    <property type="project" value="FlyBase"/>
</dbReference>
<dbReference type="GO" id="GO:0007424">
    <property type="term" value="P:open tracheal system development"/>
    <property type="evidence" value="ECO:0000315"/>
    <property type="project" value="FlyBase"/>
</dbReference>
<dbReference type="GO" id="GO:0008284">
    <property type="term" value="P:positive regulation of cell population proliferation"/>
    <property type="evidence" value="ECO:0000315"/>
    <property type="project" value="FlyBase"/>
</dbReference>
<dbReference type="GO" id="GO:0042246">
    <property type="term" value="P:tissue regeneration"/>
    <property type="evidence" value="ECO:0000315"/>
    <property type="project" value="FlyBase"/>
</dbReference>
<dbReference type="GO" id="GO:0007472">
    <property type="term" value="P:wing disc morphogenesis"/>
    <property type="evidence" value="ECO:0000315"/>
    <property type="project" value="FlyBase"/>
</dbReference>
<dbReference type="CDD" id="cd00063">
    <property type="entry name" value="FN3"/>
    <property type="match status" value="3"/>
</dbReference>
<dbReference type="FunFam" id="2.60.40.10:FF:003264">
    <property type="entry name" value="Cytokine receptor"/>
    <property type="match status" value="1"/>
</dbReference>
<dbReference type="FunFam" id="2.60.40.10:FF:003645">
    <property type="entry name" value="Cytokine receptor"/>
    <property type="match status" value="1"/>
</dbReference>
<dbReference type="Gene3D" id="2.60.40.10">
    <property type="entry name" value="Immunoglobulins"/>
    <property type="match status" value="5"/>
</dbReference>
<dbReference type="InterPro" id="IPR003961">
    <property type="entry name" value="FN3_dom"/>
</dbReference>
<dbReference type="InterPro" id="IPR036116">
    <property type="entry name" value="FN3_sf"/>
</dbReference>
<dbReference type="InterPro" id="IPR013783">
    <property type="entry name" value="Ig-like_fold"/>
</dbReference>
<dbReference type="InterPro" id="IPR050713">
    <property type="entry name" value="RTP_Phos/Ushers"/>
</dbReference>
<dbReference type="PANTHER" id="PTHR46957">
    <property type="entry name" value="CYTOKINE RECEPTOR"/>
    <property type="match status" value="1"/>
</dbReference>
<dbReference type="PANTHER" id="PTHR46957:SF3">
    <property type="entry name" value="CYTOKINE RECEPTOR"/>
    <property type="match status" value="1"/>
</dbReference>
<dbReference type="Pfam" id="PF00041">
    <property type="entry name" value="fn3"/>
    <property type="match status" value="2"/>
</dbReference>
<dbReference type="SMART" id="SM00060">
    <property type="entry name" value="FN3"/>
    <property type="match status" value="5"/>
</dbReference>
<dbReference type="SUPFAM" id="SSF49265">
    <property type="entry name" value="Fibronectin type III"/>
    <property type="match status" value="4"/>
</dbReference>
<dbReference type="PROSITE" id="PS50853">
    <property type="entry name" value="FN3"/>
    <property type="match status" value="6"/>
</dbReference>
<name>DOME_DROME</name>
<gene>
    <name type="primary">dome</name>
    <name type="ORF">CG14226</name>
</gene>
<reference key="1">
    <citation type="journal article" date="2001" name="Curr. Biol.">
        <title>Identification of the first invertebrate interleukin JAK/STAT receptor, the Drosophila gene domeless.</title>
        <authorList>
            <person name="Brown S."/>
            <person name="Hu N."/>
            <person name="Castelli-Gair Hombria J."/>
        </authorList>
    </citation>
    <scope>NUCLEOTIDE SEQUENCE [MRNA]</scope>
    <scope>FUNCTION</scope>
    <scope>TISSUE SPECIFICITY</scope>
    <scope>DEVELOPMENTAL STAGE</scope>
</reference>
<reference key="2">
    <citation type="journal article" date="2002" name="Development">
        <title>The Drosophila cytokine receptor Domeless controls border cell migration and epithelial polarization during oogenesis.</title>
        <authorList>
            <person name="Ghiglione C."/>
            <person name="Devergne O."/>
            <person name="Georgenthum E."/>
            <person name="Carballes F."/>
            <person name="Medioni C."/>
            <person name="Cerezo D."/>
            <person name="Noselli S."/>
        </authorList>
    </citation>
    <scope>NUCLEOTIDE SEQUENCE [MRNA]</scope>
    <scope>FUNCTION</scope>
    <scope>SUBCELLULAR LOCATION</scope>
</reference>
<reference key="3">
    <citation type="journal article" date="2000" name="Science">
        <title>The genome sequence of Drosophila melanogaster.</title>
        <authorList>
            <person name="Adams M.D."/>
            <person name="Celniker S.E."/>
            <person name="Holt R.A."/>
            <person name="Evans C.A."/>
            <person name="Gocayne J.D."/>
            <person name="Amanatides P.G."/>
            <person name="Scherer S.E."/>
            <person name="Li P.W."/>
            <person name="Hoskins R.A."/>
            <person name="Galle R.F."/>
            <person name="George R.A."/>
            <person name="Lewis S.E."/>
            <person name="Richards S."/>
            <person name="Ashburner M."/>
            <person name="Henderson S.N."/>
            <person name="Sutton G.G."/>
            <person name="Wortman J.R."/>
            <person name="Yandell M.D."/>
            <person name="Zhang Q."/>
            <person name="Chen L.X."/>
            <person name="Brandon R.C."/>
            <person name="Rogers Y.-H.C."/>
            <person name="Blazej R.G."/>
            <person name="Champe M."/>
            <person name="Pfeiffer B.D."/>
            <person name="Wan K.H."/>
            <person name="Doyle C."/>
            <person name="Baxter E.G."/>
            <person name="Helt G."/>
            <person name="Nelson C.R."/>
            <person name="Miklos G.L.G."/>
            <person name="Abril J.F."/>
            <person name="Agbayani A."/>
            <person name="An H.-J."/>
            <person name="Andrews-Pfannkoch C."/>
            <person name="Baldwin D."/>
            <person name="Ballew R.M."/>
            <person name="Basu A."/>
            <person name="Baxendale J."/>
            <person name="Bayraktaroglu L."/>
            <person name="Beasley E.M."/>
            <person name="Beeson K.Y."/>
            <person name="Benos P.V."/>
            <person name="Berman B.P."/>
            <person name="Bhandari D."/>
            <person name="Bolshakov S."/>
            <person name="Borkova D."/>
            <person name="Botchan M.R."/>
            <person name="Bouck J."/>
            <person name="Brokstein P."/>
            <person name="Brottier P."/>
            <person name="Burtis K.C."/>
            <person name="Busam D.A."/>
            <person name="Butler H."/>
            <person name="Cadieu E."/>
            <person name="Center A."/>
            <person name="Chandra I."/>
            <person name="Cherry J.M."/>
            <person name="Cawley S."/>
            <person name="Dahlke C."/>
            <person name="Davenport L.B."/>
            <person name="Davies P."/>
            <person name="de Pablos B."/>
            <person name="Delcher A."/>
            <person name="Deng Z."/>
            <person name="Mays A.D."/>
            <person name="Dew I."/>
            <person name="Dietz S.M."/>
            <person name="Dodson K."/>
            <person name="Doup L.E."/>
            <person name="Downes M."/>
            <person name="Dugan-Rocha S."/>
            <person name="Dunkov B.C."/>
            <person name="Dunn P."/>
            <person name="Durbin K.J."/>
            <person name="Evangelista C.C."/>
            <person name="Ferraz C."/>
            <person name="Ferriera S."/>
            <person name="Fleischmann W."/>
            <person name="Fosler C."/>
            <person name="Gabrielian A.E."/>
            <person name="Garg N.S."/>
            <person name="Gelbart W.M."/>
            <person name="Glasser K."/>
            <person name="Glodek A."/>
            <person name="Gong F."/>
            <person name="Gorrell J.H."/>
            <person name="Gu Z."/>
            <person name="Guan P."/>
            <person name="Harris M."/>
            <person name="Harris N.L."/>
            <person name="Harvey D.A."/>
            <person name="Heiman T.J."/>
            <person name="Hernandez J.R."/>
            <person name="Houck J."/>
            <person name="Hostin D."/>
            <person name="Houston K.A."/>
            <person name="Howland T.J."/>
            <person name="Wei M.-H."/>
            <person name="Ibegwam C."/>
            <person name="Jalali M."/>
            <person name="Kalush F."/>
            <person name="Karpen G.H."/>
            <person name="Ke Z."/>
            <person name="Kennison J.A."/>
            <person name="Ketchum K.A."/>
            <person name="Kimmel B.E."/>
            <person name="Kodira C.D."/>
            <person name="Kraft C.L."/>
            <person name="Kravitz S."/>
            <person name="Kulp D."/>
            <person name="Lai Z."/>
            <person name="Lasko P."/>
            <person name="Lei Y."/>
            <person name="Levitsky A.A."/>
            <person name="Li J.H."/>
            <person name="Li Z."/>
            <person name="Liang Y."/>
            <person name="Lin X."/>
            <person name="Liu X."/>
            <person name="Mattei B."/>
            <person name="McIntosh T.C."/>
            <person name="McLeod M.P."/>
            <person name="McPherson D."/>
            <person name="Merkulov G."/>
            <person name="Milshina N.V."/>
            <person name="Mobarry C."/>
            <person name="Morris J."/>
            <person name="Moshrefi A."/>
            <person name="Mount S.M."/>
            <person name="Moy M."/>
            <person name="Murphy B."/>
            <person name="Murphy L."/>
            <person name="Muzny D.M."/>
            <person name="Nelson D.L."/>
            <person name="Nelson D.R."/>
            <person name="Nelson K.A."/>
            <person name="Nixon K."/>
            <person name="Nusskern D.R."/>
            <person name="Pacleb J.M."/>
            <person name="Palazzolo M."/>
            <person name="Pittman G.S."/>
            <person name="Pan S."/>
            <person name="Pollard J."/>
            <person name="Puri V."/>
            <person name="Reese M.G."/>
            <person name="Reinert K."/>
            <person name="Remington K."/>
            <person name="Saunders R.D.C."/>
            <person name="Scheeler F."/>
            <person name="Shen H."/>
            <person name="Shue B.C."/>
            <person name="Siden-Kiamos I."/>
            <person name="Simpson M."/>
            <person name="Skupski M.P."/>
            <person name="Smith T.J."/>
            <person name="Spier E."/>
            <person name="Spradling A.C."/>
            <person name="Stapleton M."/>
            <person name="Strong R."/>
            <person name="Sun E."/>
            <person name="Svirskas R."/>
            <person name="Tector C."/>
            <person name="Turner R."/>
            <person name="Venter E."/>
            <person name="Wang A.H."/>
            <person name="Wang X."/>
            <person name="Wang Z.-Y."/>
            <person name="Wassarman D.A."/>
            <person name="Weinstock G.M."/>
            <person name="Weissenbach J."/>
            <person name="Williams S.M."/>
            <person name="Woodage T."/>
            <person name="Worley K.C."/>
            <person name="Wu D."/>
            <person name="Yang S."/>
            <person name="Yao Q.A."/>
            <person name="Ye J."/>
            <person name="Yeh R.-F."/>
            <person name="Zaveri J.S."/>
            <person name="Zhan M."/>
            <person name="Zhang G."/>
            <person name="Zhao Q."/>
            <person name="Zheng L."/>
            <person name="Zheng X.H."/>
            <person name="Zhong F.N."/>
            <person name="Zhong W."/>
            <person name="Zhou X."/>
            <person name="Zhu S.C."/>
            <person name="Zhu X."/>
            <person name="Smith H.O."/>
            <person name="Gibbs R.A."/>
            <person name="Myers E.W."/>
            <person name="Rubin G.M."/>
            <person name="Venter J.C."/>
        </authorList>
    </citation>
    <scope>NUCLEOTIDE SEQUENCE [LARGE SCALE GENOMIC DNA]</scope>
    <source>
        <strain>Berkeley</strain>
    </source>
</reference>
<reference key="4">
    <citation type="journal article" date="2002" name="Genome Biol.">
        <title>Annotation of the Drosophila melanogaster euchromatic genome: a systematic review.</title>
        <authorList>
            <person name="Misra S."/>
            <person name="Crosby M.A."/>
            <person name="Mungall C.J."/>
            <person name="Matthews B.B."/>
            <person name="Campbell K.S."/>
            <person name="Hradecky P."/>
            <person name="Huang Y."/>
            <person name="Kaminker J.S."/>
            <person name="Millburn G.H."/>
            <person name="Prochnik S.E."/>
            <person name="Smith C.D."/>
            <person name="Tupy J.L."/>
            <person name="Whitfield E.J."/>
            <person name="Bayraktaroglu L."/>
            <person name="Berman B.P."/>
            <person name="Bettencourt B.R."/>
            <person name="Celniker S.E."/>
            <person name="de Grey A.D.N.J."/>
            <person name="Drysdale R.A."/>
            <person name="Harris N.L."/>
            <person name="Richter J."/>
            <person name="Russo S."/>
            <person name="Schroeder A.J."/>
            <person name="Shu S.Q."/>
            <person name="Stapleton M."/>
            <person name="Yamada C."/>
            <person name="Ashburner M."/>
            <person name="Gelbart W.M."/>
            <person name="Rubin G.M."/>
            <person name="Lewis S.E."/>
        </authorList>
    </citation>
    <scope>GENOME REANNOTATION</scope>
    <source>
        <strain>Berkeley</strain>
    </source>
</reference>
<reference key="5">
    <citation type="journal article" date="2002" name="Genome Biol.">
        <title>A Drosophila full-length cDNA resource.</title>
        <authorList>
            <person name="Stapleton M."/>
            <person name="Carlson J.W."/>
            <person name="Brokstein P."/>
            <person name="Yu C."/>
            <person name="Champe M."/>
            <person name="George R.A."/>
            <person name="Guarin H."/>
            <person name="Kronmiller B."/>
            <person name="Pacleb J.M."/>
            <person name="Park S."/>
            <person name="Wan K.H."/>
            <person name="Rubin G.M."/>
            <person name="Celniker S.E."/>
        </authorList>
    </citation>
    <scope>NUCLEOTIDE SEQUENCE [LARGE SCALE MRNA]</scope>
    <source>
        <strain>Berkeley</strain>
        <tissue>Embryo</tissue>
    </source>
</reference>
<reference key="6">
    <citation type="journal article" date="2008" name="J. Proteome Res.">
        <title>Phosphoproteome analysis of Drosophila melanogaster embryos.</title>
        <authorList>
            <person name="Zhai B."/>
            <person name="Villen J."/>
            <person name="Beausoleil S.A."/>
            <person name="Mintseris J."/>
            <person name="Gygi S.P."/>
        </authorList>
    </citation>
    <scope>PHOSPHORYLATION [LARGE SCALE ANALYSIS] AT SER-976</scope>
    <scope>IDENTIFICATION BY MASS SPECTROMETRY</scope>
    <source>
        <tissue>Embryo</tissue>
    </source>
</reference>
<reference key="7">
    <citation type="journal article" date="2015" name="PLoS Genet.">
        <title>Windpipe controls Drosophila intestinal homeostasis by regulating JAK/STAT pathway via promoting receptor endocytosis and lysosomal degradation.</title>
        <authorList>
            <person name="Ren W."/>
            <person name="Zhang Y."/>
            <person name="Li M."/>
            <person name="Wu L."/>
            <person name="Wang G."/>
            <person name="Baeg G.H."/>
            <person name="You J."/>
            <person name="Li Z."/>
            <person name="Lin X."/>
        </authorList>
    </citation>
    <scope>INTERACTION WITH WDP</scope>
    <scope>LYSOSOMAL DEGRADATION</scope>
</reference>
<organism>
    <name type="scientific">Drosophila melanogaster</name>
    <name type="common">Fruit fly</name>
    <dbReference type="NCBI Taxonomy" id="7227"/>
    <lineage>
        <taxon>Eukaryota</taxon>
        <taxon>Metazoa</taxon>
        <taxon>Ecdysozoa</taxon>
        <taxon>Arthropoda</taxon>
        <taxon>Hexapoda</taxon>
        <taxon>Insecta</taxon>
        <taxon>Pterygota</taxon>
        <taxon>Neoptera</taxon>
        <taxon>Endopterygota</taxon>
        <taxon>Diptera</taxon>
        <taxon>Brachycera</taxon>
        <taxon>Muscomorpha</taxon>
        <taxon>Ephydroidea</taxon>
        <taxon>Drosophilidae</taxon>
        <taxon>Drosophila</taxon>
        <taxon>Sophophora</taxon>
    </lineage>
</organism>
<evidence type="ECO:0000250" key="1"/>
<evidence type="ECO:0000255" key="2"/>
<evidence type="ECO:0000255" key="3">
    <source>
        <dbReference type="PROSITE-ProRule" id="PRU00316"/>
    </source>
</evidence>
<evidence type="ECO:0000256" key="4">
    <source>
        <dbReference type="SAM" id="MobiDB-lite"/>
    </source>
</evidence>
<evidence type="ECO:0000269" key="5">
    <source>
    </source>
</evidence>
<evidence type="ECO:0000269" key="6">
    <source>
    </source>
</evidence>
<evidence type="ECO:0000269" key="7">
    <source>
    </source>
</evidence>
<evidence type="ECO:0000269" key="8">
    <source>
    </source>
</evidence>
<evidence type="ECO:0000305" key="9"/>